<name>CYSH_SINFN</name>
<reference key="1">
    <citation type="journal article" date="2009" name="Appl. Environ. Microbiol.">
        <title>Rhizobium sp. strain NGR234 possesses a remarkable number of secretion systems.</title>
        <authorList>
            <person name="Schmeisser C."/>
            <person name="Liesegang H."/>
            <person name="Krysciak D."/>
            <person name="Bakkou N."/>
            <person name="Le Quere A."/>
            <person name="Wollherr A."/>
            <person name="Heinemeyer I."/>
            <person name="Morgenstern B."/>
            <person name="Pommerening-Roeser A."/>
            <person name="Flores M."/>
            <person name="Palacios R."/>
            <person name="Brenner S."/>
            <person name="Gottschalk G."/>
            <person name="Schmitz R.A."/>
            <person name="Broughton W.J."/>
            <person name="Perret X."/>
            <person name="Strittmatter A.W."/>
            <person name="Streit W.R."/>
        </authorList>
    </citation>
    <scope>NUCLEOTIDE SEQUENCE [LARGE SCALE GENOMIC DNA]</scope>
    <source>
        <strain>NBRC 101917 / NGR234</strain>
    </source>
</reference>
<reference key="2">
    <citation type="journal article" date="1999" name="J. Bacteriol.">
        <title>Reduction of adenosine-5'-phosphosulfate instead of 3'-phosphoadenosine-5'-phosphosulfate in cysteine biosynthesis by Rhizobium meliloti and other members of the family Rhizobiaceae.</title>
        <authorList>
            <person name="Abola A.P."/>
            <person name="Willits M.G."/>
            <person name="Wang R.C."/>
            <person name="Long S.R."/>
        </authorList>
    </citation>
    <scope>FUNCTION</scope>
    <scope>CATALYTIC ACTIVITY</scope>
    <source>
        <strain>NBRC 101917 / NGR234</strain>
    </source>
</reference>
<gene>
    <name evidence="1 3" type="primary">cysH</name>
    <name evidence="5" type="ordered locus">NGR_c06960</name>
</gene>
<feature type="active site" description="Nucleophile; cysteine thiosulfonate intermediate" evidence="1">
    <location>
        <position position="232"/>
    </location>
</feature>
<feature type="binding site" evidence="1">
    <location>
        <position position="121"/>
    </location>
    <ligand>
        <name>[4Fe-4S] cluster</name>
        <dbReference type="ChEBI" id="CHEBI:49883"/>
    </ligand>
</feature>
<feature type="binding site" evidence="1">
    <location>
        <position position="122"/>
    </location>
    <ligand>
        <name>[4Fe-4S] cluster</name>
        <dbReference type="ChEBI" id="CHEBI:49883"/>
    </ligand>
</feature>
<feature type="binding site" evidence="1">
    <location>
        <position position="204"/>
    </location>
    <ligand>
        <name>[4Fe-4S] cluster</name>
        <dbReference type="ChEBI" id="CHEBI:49883"/>
    </ligand>
</feature>
<feature type="binding site" evidence="1">
    <location>
        <position position="207"/>
    </location>
    <ligand>
        <name>[4Fe-4S] cluster</name>
        <dbReference type="ChEBI" id="CHEBI:49883"/>
    </ligand>
</feature>
<protein>
    <recommendedName>
        <fullName evidence="1 3">Adenosine 5'-phosphosulfate reductase</fullName>
        <shortName evidence="1 3">APS reductase</shortName>
        <ecNumber evidence="1 2">1.8.4.10</ecNumber>
    </recommendedName>
    <alternativeName>
        <fullName evidence="1 4">5'-adenylylsulfate reductase</fullName>
    </alternativeName>
    <alternativeName>
        <fullName evidence="1 4">Thioredoxin-dependent 5'-adenylylsulfate reductase</fullName>
    </alternativeName>
</protein>
<evidence type="ECO:0000255" key="1">
    <source>
        <dbReference type="HAMAP-Rule" id="MF_00063"/>
    </source>
</evidence>
<evidence type="ECO:0000269" key="2">
    <source>
    </source>
</evidence>
<evidence type="ECO:0000303" key="3">
    <source>
    </source>
</evidence>
<evidence type="ECO:0000305" key="4"/>
<evidence type="ECO:0000312" key="5">
    <source>
        <dbReference type="EMBL" id="ACP24489.1"/>
    </source>
</evidence>
<sequence length="251" mass="27380">MTTQSLEAEAKALNDRLEGLDLAGRLALVAGLEGRAVFTTSLGIEDQVITAALGSNRLDIEVATLKTGRLFNETVALIEATEEAYDILIKRYYPEKADIEDYVAQYGMNGFYESVEARHACCGVRKLRPLARALEGASYWITGLRRGQSGNRAATPYAEADLERGLIKINPLADWDIDVIRAHVAAEAIPVNPLHGRGYPSIGCEPCTRAIKPGEPERAGRWWWENDEKRECGLHVAEAASSIIPNASSAA</sequence>
<accession>C3MIE1</accession>
<keyword id="KW-0963">Cytoplasm</keyword>
<keyword id="KW-0408">Iron</keyword>
<keyword id="KW-0411">Iron-sulfur</keyword>
<keyword id="KW-0479">Metal-binding</keyword>
<keyword id="KW-0560">Oxidoreductase</keyword>
<keyword id="KW-1185">Reference proteome</keyword>
<comment type="function">
    <text evidence="1 2">Catalyzes the formation of sulfite from adenosine 5'-phosphosulfate (APS) using thioredoxin as an electron donor.</text>
</comment>
<comment type="catalytic activity">
    <reaction evidence="1 2">
        <text>[thioredoxin]-disulfide + sulfite + AMP + 2 H(+) = adenosine 5'-phosphosulfate + [thioredoxin]-dithiol</text>
        <dbReference type="Rhea" id="RHEA:21976"/>
        <dbReference type="Rhea" id="RHEA-COMP:10698"/>
        <dbReference type="Rhea" id="RHEA-COMP:10700"/>
        <dbReference type="ChEBI" id="CHEBI:15378"/>
        <dbReference type="ChEBI" id="CHEBI:17359"/>
        <dbReference type="ChEBI" id="CHEBI:29950"/>
        <dbReference type="ChEBI" id="CHEBI:50058"/>
        <dbReference type="ChEBI" id="CHEBI:58243"/>
        <dbReference type="ChEBI" id="CHEBI:456215"/>
        <dbReference type="EC" id="1.8.4.10"/>
    </reaction>
</comment>
<comment type="cofactor">
    <cofactor evidence="1">
        <name>[4Fe-4S] cluster</name>
        <dbReference type="ChEBI" id="CHEBI:49883"/>
    </cofactor>
    <text evidence="1">Binds 1 [4Fe-4S] cluster per subunit.</text>
</comment>
<comment type="pathway">
    <text evidence="1">Sulfur metabolism; hydrogen sulfide biosynthesis; sulfite from sulfate.</text>
</comment>
<comment type="subcellular location">
    <subcellularLocation>
        <location evidence="1">Cytoplasm</location>
    </subcellularLocation>
</comment>
<comment type="similarity">
    <text evidence="1">Belongs to the PAPS reductase family. CysH subfamily.</text>
</comment>
<proteinExistence type="evidence at protein level"/>
<dbReference type="EC" id="1.8.4.10" evidence="1 2"/>
<dbReference type="EMBL" id="CP001389">
    <property type="protein sequence ID" value="ACP24489.1"/>
    <property type="molecule type" value="Genomic_DNA"/>
</dbReference>
<dbReference type="RefSeq" id="WP_012707274.1">
    <property type="nucleotide sequence ID" value="NC_012587.1"/>
</dbReference>
<dbReference type="RefSeq" id="YP_002825242.1">
    <property type="nucleotide sequence ID" value="NC_012587.1"/>
</dbReference>
<dbReference type="SMR" id="C3MIE1"/>
<dbReference type="STRING" id="394.NGR_c06960"/>
<dbReference type="KEGG" id="rhi:NGR_c06960"/>
<dbReference type="PATRIC" id="fig|394.7.peg.3509"/>
<dbReference type="eggNOG" id="COG0175">
    <property type="taxonomic scope" value="Bacteria"/>
</dbReference>
<dbReference type="HOGENOM" id="CLU_044089_1_0_5"/>
<dbReference type="OrthoDB" id="9794018at2"/>
<dbReference type="Proteomes" id="UP000001054">
    <property type="component" value="Chromosome"/>
</dbReference>
<dbReference type="GO" id="GO:0005737">
    <property type="term" value="C:cytoplasm"/>
    <property type="evidence" value="ECO:0007669"/>
    <property type="project" value="UniProtKB-SubCell"/>
</dbReference>
<dbReference type="GO" id="GO:0051539">
    <property type="term" value="F:4 iron, 4 sulfur cluster binding"/>
    <property type="evidence" value="ECO:0007669"/>
    <property type="project" value="UniProtKB-UniRule"/>
</dbReference>
<dbReference type="GO" id="GO:0043866">
    <property type="term" value="F:adenylyl-sulfate reductase (thioredoxin) activity"/>
    <property type="evidence" value="ECO:0007669"/>
    <property type="project" value="UniProtKB-EC"/>
</dbReference>
<dbReference type="GO" id="GO:0046872">
    <property type="term" value="F:metal ion binding"/>
    <property type="evidence" value="ECO:0007669"/>
    <property type="project" value="UniProtKB-KW"/>
</dbReference>
<dbReference type="GO" id="GO:0004604">
    <property type="term" value="F:phosphoadenylyl-sulfate reductase (thioredoxin) activity"/>
    <property type="evidence" value="ECO:0007669"/>
    <property type="project" value="UniProtKB-UniRule"/>
</dbReference>
<dbReference type="GO" id="GO:0019344">
    <property type="term" value="P:cysteine biosynthetic process"/>
    <property type="evidence" value="ECO:0007669"/>
    <property type="project" value="InterPro"/>
</dbReference>
<dbReference type="GO" id="GO:0070814">
    <property type="term" value="P:hydrogen sulfide biosynthetic process"/>
    <property type="evidence" value="ECO:0007669"/>
    <property type="project" value="UniProtKB-UniRule"/>
</dbReference>
<dbReference type="GO" id="GO:0019379">
    <property type="term" value="P:sulfate assimilation, phosphoadenylyl sulfate reduction by phosphoadenylyl-sulfate reductase (thioredoxin)"/>
    <property type="evidence" value="ECO:0007669"/>
    <property type="project" value="UniProtKB-UniRule"/>
</dbReference>
<dbReference type="CDD" id="cd23945">
    <property type="entry name" value="PAPS_reductase"/>
    <property type="match status" value="1"/>
</dbReference>
<dbReference type="Gene3D" id="3.40.50.620">
    <property type="entry name" value="HUPs"/>
    <property type="match status" value="1"/>
</dbReference>
<dbReference type="HAMAP" id="MF_00063">
    <property type="entry name" value="CysH"/>
    <property type="match status" value="1"/>
</dbReference>
<dbReference type="InterPro" id="IPR011798">
    <property type="entry name" value="APS_reductase"/>
</dbReference>
<dbReference type="InterPro" id="IPR004511">
    <property type="entry name" value="PAPS/APS_Rdtase"/>
</dbReference>
<dbReference type="InterPro" id="IPR002500">
    <property type="entry name" value="PAPS_reduct_dom"/>
</dbReference>
<dbReference type="InterPro" id="IPR014729">
    <property type="entry name" value="Rossmann-like_a/b/a_fold"/>
</dbReference>
<dbReference type="NCBIfam" id="TIGR02055">
    <property type="entry name" value="APS_reductase"/>
    <property type="match status" value="1"/>
</dbReference>
<dbReference type="NCBIfam" id="NF002537">
    <property type="entry name" value="PRK02090.1"/>
    <property type="match status" value="1"/>
</dbReference>
<dbReference type="PANTHER" id="PTHR46482:SF9">
    <property type="entry name" value="5'-ADENYLYLSULFATE REDUCTASE 1, CHLOROPLASTIC"/>
    <property type="match status" value="1"/>
</dbReference>
<dbReference type="PANTHER" id="PTHR46482">
    <property type="entry name" value="5'-ADENYLYLSULFATE REDUCTASE 3, CHLOROPLASTIC"/>
    <property type="match status" value="1"/>
</dbReference>
<dbReference type="Pfam" id="PF01507">
    <property type="entry name" value="PAPS_reduct"/>
    <property type="match status" value="1"/>
</dbReference>
<dbReference type="PIRSF" id="PIRSF000857">
    <property type="entry name" value="PAPS_reductase"/>
    <property type="match status" value="1"/>
</dbReference>
<dbReference type="SUPFAM" id="SSF52402">
    <property type="entry name" value="Adenine nucleotide alpha hydrolases-like"/>
    <property type="match status" value="1"/>
</dbReference>
<organism>
    <name type="scientific">Sinorhizobium fredii (strain NBRC 101917 / NGR234)</name>
    <dbReference type="NCBI Taxonomy" id="394"/>
    <lineage>
        <taxon>Bacteria</taxon>
        <taxon>Pseudomonadati</taxon>
        <taxon>Pseudomonadota</taxon>
        <taxon>Alphaproteobacteria</taxon>
        <taxon>Hyphomicrobiales</taxon>
        <taxon>Rhizobiaceae</taxon>
        <taxon>Sinorhizobium/Ensifer group</taxon>
        <taxon>Sinorhizobium</taxon>
    </lineage>
</organism>